<reference key="1">
    <citation type="journal article" date="2005" name="Science">
        <title>The transcriptional landscape of the mammalian genome.</title>
        <authorList>
            <person name="Carninci P."/>
            <person name="Kasukawa T."/>
            <person name="Katayama S."/>
            <person name="Gough J."/>
            <person name="Frith M.C."/>
            <person name="Maeda N."/>
            <person name="Oyama R."/>
            <person name="Ravasi T."/>
            <person name="Lenhard B."/>
            <person name="Wells C."/>
            <person name="Kodzius R."/>
            <person name="Shimokawa K."/>
            <person name="Bajic V.B."/>
            <person name="Brenner S.E."/>
            <person name="Batalov S."/>
            <person name="Forrest A.R."/>
            <person name="Zavolan M."/>
            <person name="Davis M.J."/>
            <person name="Wilming L.G."/>
            <person name="Aidinis V."/>
            <person name="Allen J.E."/>
            <person name="Ambesi-Impiombato A."/>
            <person name="Apweiler R."/>
            <person name="Aturaliya R.N."/>
            <person name="Bailey T.L."/>
            <person name="Bansal M."/>
            <person name="Baxter L."/>
            <person name="Beisel K.W."/>
            <person name="Bersano T."/>
            <person name="Bono H."/>
            <person name="Chalk A.M."/>
            <person name="Chiu K.P."/>
            <person name="Choudhary V."/>
            <person name="Christoffels A."/>
            <person name="Clutterbuck D.R."/>
            <person name="Crowe M.L."/>
            <person name="Dalla E."/>
            <person name="Dalrymple B.P."/>
            <person name="de Bono B."/>
            <person name="Della Gatta G."/>
            <person name="di Bernardo D."/>
            <person name="Down T."/>
            <person name="Engstrom P."/>
            <person name="Fagiolini M."/>
            <person name="Faulkner G."/>
            <person name="Fletcher C.F."/>
            <person name="Fukushima T."/>
            <person name="Furuno M."/>
            <person name="Futaki S."/>
            <person name="Gariboldi M."/>
            <person name="Georgii-Hemming P."/>
            <person name="Gingeras T.R."/>
            <person name="Gojobori T."/>
            <person name="Green R.E."/>
            <person name="Gustincich S."/>
            <person name="Harbers M."/>
            <person name="Hayashi Y."/>
            <person name="Hensch T.K."/>
            <person name="Hirokawa N."/>
            <person name="Hill D."/>
            <person name="Huminiecki L."/>
            <person name="Iacono M."/>
            <person name="Ikeo K."/>
            <person name="Iwama A."/>
            <person name="Ishikawa T."/>
            <person name="Jakt M."/>
            <person name="Kanapin A."/>
            <person name="Katoh M."/>
            <person name="Kawasawa Y."/>
            <person name="Kelso J."/>
            <person name="Kitamura H."/>
            <person name="Kitano H."/>
            <person name="Kollias G."/>
            <person name="Krishnan S.P."/>
            <person name="Kruger A."/>
            <person name="Kummerfeld S.K."/>
            <person name="Kurochkin I.V."/>
            <person name="Lareau L.F."/>
            <person name="Lazarevic D."/>
            <person name="Lipovich L."/>
            <person name="Liu J."/>
            <person name="Liuni S."/>
            <person name="McWilliam S."/>
            <person name="Madan Babu M."/>
            <person name="Madera M."/>
            <person name="Marchionni L."/>
            <person name="Matsuda H."/>
            <person name="Matsuzawa S."/>
            <person name="Miki H."/>
            <person name="Mignone F."/>
            <person name="Miyake S."/>
            <person name="Morris K."/>
            <person name="Mottagui-Tabar S."/>
            <person name="Mulder N."/>
            <person name="Nakano N."/>
            <person name="Nakauchi H."/>
            <person name="Ng P."/>
            <person name="Nilsson R."/>
            <person name="Nishiguchi S."/>
            <person name="Nishikawa S."/>
            <person name="Nori F."/>
            <person name="Ohara O."/>
            <person name="Okazaki Y."/>
            <person name="Orlando V."/>
            <person name="Pang K.C."/>
            <person name="Pavan W.J."/>
            <person name="Pavesi G."/>
            <person name="Pesole G."/>
            <person name="Petrovsky N."/>
            <person name="Piazza S."/>
            <person name="Reed J."/>
            <person name="Reid J.F."/>
            <person name="Ring B.Z."/>
            <person name="Ringwald M."/>
            <person name="Rost B."/>
            <person name="Ruan Y."/>
            <person name="Salzberg S.L."/>
            <person name="Sandelin A."/>
            <person name="Schneider C."/>
            <person name="Schoenbach C."/>
            <person name="Sekiguchi K."/>
            <person name="Semple C.A."/>
            <person name="Seno S."/>
            <person name="Sessa L."/>
            <person name="Sheng Y."/>
            <person name="Shibata Y."/>
            <person name="Shimada H."/>
            <person name="Shimada K."/>
            <person name="Silva D."/>
            <person name="Sinclair B."/>
            <person name="Sperling S."/>
            <person name="Stupka E."/>
            <person name="Sugiura K."/>
            <person name="Sultana R."/>
            <person name="Takenaka Y."/>
            <person name="Taki K."/>
            <person name="Tammoja K."/>
            <person name="Tan S.L."/>
            <person name="Tang S."/>
            <person name="Taylor M.S."/>
            <person name="Tegner J."/>
            <person name="Teichmann S.A."/>
            <person name="Ueda H.R."/>
            <person name="van Nimwegen E."/>
            <person name="Verardo R."/>
            <person name="Wei C.L."/>
            <person name="Yagi K."/>
            <person name="Yamanishi H."/>
            <person name="Zabarovsky E."/>
            <person name="Zhu S."/>
            <person name="Zimmer A."/>
            <person name="Hide W."/>
            <person name="Bult C."/>
            <person name="Grimmond S.M."/>
            <person name="Teasdale R.D."/>
            <person name="Liu E.T."/>
            <person name="Brusic V."/>
            <person name="Quackenbush J."/>
            <person name="Wahlestedt C."/>
            <person name="Mattick J.S."/>
            <person name="Hume D.A."/>
            <person name="Kai C."/>
            <person name="Sasaki D."/>
            <person name="Tomaru Y."/>
            <person name="Fukuda S."/>
            <person name="Kanamori-Katayama M."/>
            <person name="Suzuki M."/>
            <person name="Aoki J."/>
            <person name="Arakawa T."/>
            <person name="Iida J."/>
            <person name="Imamura K."/>
            <person name="Itoh M."/>
            <person name="Kato T."/>
            <person name="Kawaji H."/>
            <person name="Kawagashira N."/>
            <person name="Kawashima T."/>
            <person name="Kojima M."/>
            <person name="Kondo S."/>
            <person name="Konno H."/>
            <person name="Nakano K."/>
            <person name="Ninomiya N."/>
            <person name="Nishio T."/>
            <person name="Okada M."/>
            <person name="Plessy C."/>
            <person name="Shibata K."/>
            <person name="Shiraki T."/>
            <person name="Suzuki S."/>
            <person name="Tagami M."/>
            <person name="Waki K."/>
            <person name="Watahiki A."/>
            <person name="Okamura-Oho Y."/>
            <person name="Suzuki H."/>
            <person name="Kawai J."/>
            <person name="Hayashizaki Y."/>
        </authorList>
    </citation>
    <scope>NUCLEOTIDE SEQUENCE [LARGE SCALE MRNA]</scope>
    <source>
        <strain>C57BL/6J</strain>
        <tissue>Diencephalon</tissue>
    </source>
</reference>
<reference key="2">
    <citation type="journal article" date="2004" name="Genome Res.">
        <title>The status, quality, and expansion of the NIH full-length cDNA project: the Mammalian Gene Collection (MGC).</title>
        <authorList>
            <consortium name="The MGC Project Team"/>
        </authorList>
    </citation>
    <scope>NUCLEOTIDE SEQUENCE [LARGE SCALE MRNA]</scope>
    <source>
        <strain>FVB/N</strain>
        <tissue>Salivary gland</tissue>
    </source>
</reference>
<name>NPAL2_MOUSE</name>
<dbReference type="EMBL" id="AK033975">
    <property type="protein sequence ID" value="BAC28534.1"/>
    <property type="molecule type" value="mRNA"/>
</dbReference>
<dbReference type="EMBL" id="BC016107">
    <property type="protein sequence ID" value="AAH16107.1"/>
    <property type="molecule type" value="mRNA"/>
</dbReference>
<dbReference type="EMBL" id="BC030399">
    <property type="protein sequence ID" value="AAH30399.1"/>
    <property type="molecule type" value="mRNA"/>
</dbReference>
<dbReference type="EMBL" id="BC058207">
    <property type="protein sequence ID" value="AAH58207.1"/>
    <property type="molecule type" value="mRNA"/>
</dbReference>
<dbReference type="CCDS" id="CCDS37058.1"/>
<dbReference type="RefSeq" id="NP_663444.2">
    <property type="nucleotide sequence ID" value="NM_145469.5"/>
</dbReference>
<dbReference type="FunCoup" id="Q91WC7">
    <property type="interactions" value="44"/>
</dbReference>
<dbReference type="STRING" id="10090.ENSMUSP00000038922"/>
<dbReference type="GlyCosmos" id="Q91WC7">
    <property type="glycosylation" value="2 sites, No reported glycans"/>
</dbReference>
<dbReference type="GlyGen" id="Q91WC7">
    <property type="glycosylation" value="2 sites"/>
</dbReference>
<dbReference type="PhosphoSitePlus" id="Q91WC7"/>
<dbReference type="PaxDb" id="10090-ENSMUSP00000038922"/>
<dbReference type="ProteomicsDB" id="253001"/>
<dbReference type="DNASU" id="223473"/>
<dbReference type="GeneID" id="223473"/>
<dbReference type="KEGG" id="mmu:223473"/>
<dbReference type="UCSC" id="uc007vlw.1">
    <property type="organism name" value="mouse"/>
</dbReference>
<dbReference type="AGR" id="MGI:1924488"/>
<dbReference type="CTD" id="79815"/>
<dbReference type="MGI" id="MGI:1924488">
    <property type="gene designation" value="Nipal2"/>
</dbReference>
<dbReference type="eggNOG" id="KOG2922">
    <property type="taxonomic scope" value="Eukaryota"/>
</dbReference>
<dbReference type="InParanoid" id="Q91WC7"/>
<dbReference type="OrthoDB" id="165382at2759"/>
<dbReference type="PhylomeDB" id="Q91WC7"/>
<dbReference type="TreeFam" id="TF313214"/>
<dbReference type="Reactome" id="R-MMU-5223345">
    <property type="pathway name" value="Miscellaneous transport and binding events"/>
</dbReference>
<dbReference type="BioGRID-ORCS" id="223473">
    <property type="hits" value="2 hits in 76 CRISPR screens"/>
</dbReference>
<dbReference type="ChiTaRS" id="Nipal2">
    <property type="organism name" value="mouse"/>
</dbReference>
<dbReference type="PRO" id="PR:Q91WC7"/>
<dbReference type="Proteomes" id="UP000000589">
    <property type="component" value="Unplaced"/>
</dbReference>
<dbReference type="RNAct" id="Q91WC7">
    <property type="molecule type" value="protein"/>
</dbReference>
<dbReference type="GO" id="GO:0016020">
    <property type="term" value="C:membrane"/>
    <property type="evidence" value="ECO:0007669"/>
    <property type="project" value="UniProtKB-SubCell"/>
</dbReference>
<dbReference type="GO" id="GO:0015095">
    <property type="term" value="F:magnesium ion transmembrane transporter activity"/>
    <property type="evidence" value="ECO:0007669"/>
    <property type="project" value="InterPro"/>
</dbReference>
<dbReference type="InterPro" id="IPR008521">
    <property type="entry name" value="Mg_trans_NIPA"/>
</dbReference>
<dbReference type="PANTHER" id="PTHR12570">
    <property type="match status" value="1"/>
</dbReference>
<dbReference type="PANTHER" id="PTHR12570:SF16">
    <property type="entry name" value="NIPA-LIKE PROTEIN 2"/>
    <property type="match status" value="1"/>
</dbReference>
<dbReference type="Pfam" id="PF05653">
    <property type="entry name" value="Mg_trans_NIPA"/>
    <property type="match status" value="1"/>
</dbReference>
<dbReference type="SUPFAM" id="SSF103481">
    <property type="entry name" value="Multidrug resistance efflux transporter EmrE"/>
    <property type="match status" value="1"/>
</dbReference>
<keyword id="KW-0325">Glycoprotein</keyword>
<keyword id="KW-0472">Membrane</keyword>
<keyword id="KW-1185">Reference proteome</keyword>
<keyword id="KW-0812">Transmembrane</keyword>
<keyword id="KW-1133">Transmembrane helix</keyword>
<gene>
    <name type="primary">Nipal2</name>
    <name type="synonym">Npal2</name>
</gene>
<accession>Q91WC7</accession>
<accession>Q8CC43</accession>
<evidence type="ECO:0000255" key="1"/>
<evidence type="ECO:0000256" key="2">
    <source>
        <dbReference type="SAM" id="MobiDB-lite"/>
    </source>
</evidence>
<evidence type="ECO:0000305" key="3"/>
<proteinExistence type="evidence at transcript level"/>
<organism>
    <name type="scientific">Mus musculus</name>
    <name type="common">Mouse</name>
    <dbReference type="NCBI Taxonomy" id="10090"/>
    <lineage>
        <taxon>Eukaryota</taxon>
        <taxon>Metazoa</taxon>
        <taxon>Chordata</taxon>
        <taxon>Craniata</taxon>
        <taxon>Vertebrata</taxon>
        <taxon>Euteleostomi</taxon>
        <taxon>Mammalia</taxon>
        <taxon>Eutheria</taxon>
        <taxon>Euarchontoglires</taxon>
        <taxon>Glires</taxon>
        <taxon>Rodentia</taxon>
        <taxon>Myomorpha</taxon>
        <taxon>Muroidea</taxon>
        <taxon>Muridae</taxon>
        <taxon>Murinae</taxon>
        <taxon>Mus</taxon>
        <taxon>Mus</taxon>
    </lineage>
</organism>
<feature type="chain" id="PRO_0000242149" description="NIPA-like protein 2">
    <location>
        <begin position="1"/>
        <end position="383"/>
    </location>
</feature>
<feature type="transmembrane region" description="Helical" evidence="1">
    <location>
        <begin position="46"/>
        <end position="66"/>
    </location>
</feature>
<feature type="transmembrane region" description="Helical" evidence="1">
    <location>
        <begin position="88"/>
        <end position="108"/>
    </location>
</feature>
<feature type="transmembrane region" description="Helical" evidence="1">
    <location>
        <begin position="115"/>
        <end position="135"/>
    </location>
</feature>
<feature type="transmembrane region" description="Helical" evidence="1">
    <location>
        <begin position="144"/>
        <end position="164"/>
    </location>
</feature>
<feature type="transmembrane region" description="Helical" evidence="1">
    <location>
        <begin position="177"/>
        <end position="197"/>
    </location>
</feature>
<feature type="transmembrane region" description="Helical" evidence="1">
    <location>
        <begin position="208"/>
        <end position="228"/>
    </location>
</feature>
<feature type="transmembrane region" description="Helical" evidence="1">
    <location>
        <begin position="243"/>
        <end position="263"/>
    </location>
</feature>
<feature type="transmembrane region" description="Helical" evidence="1">
    <location>
        <begin position="278"/>
        <end position="298"/>
    </location>
</feature>
<feature type="transmembrane region" description="Helical" evidence="1">
    <location>
        <begin position="306"/>
        <end position="326"/>
    </location>
</feature>
<feature type="region of interest" description="Disordered" evidence="2">
    <location>
        <begin position="352"/>
        <end position="383"/>
    </location>
</feature>
<feature type="glycosylation site" description="N-linked (GlcNAc...) asparagine" evidence="1">
    <location>
        <position position="23"/>
    </location>
</feature>
<feature type="glycosylation site" description="N-linked (GlcNAc...) asparagine" evidence="1">
    <location>
        <position position="33"/>
    </location>
</feature>
<feature type="sequence conflict" description="In Ref. 1; BAC28534 and 2; AAH58207." evidence="3" ref="1 2">
    <original>L</original>
    <variation>I</variation>
    <location>
        <position position="133"/>
    </location>
</feature>
<feature type="sequence conflict" description="In Ref. 1; BAC28534 and 2; AAH58207." evidence="3" ref="1 2">
    <original>I</original>
    <variation>V</variation>
    <location>
        <position position="164"/>
    </location>
</feature>
<protein>
    <recommendedName>
        <fullName>NIPA-like protein 2</fullName>
    </recommendedName>
</protein>
<comment type="subcellular location">
    <subcellularLocation>
        <location evidence="3">Membrane</location>
        <topology evidence="3">Multi-pass membrane protein</topology>
    </subcellularLocation>
</comment>
<comment type="similarity">
    <text evidence="3">Belongs to the NIPA family.</text>
</comment>
<sequence length="383" mass="42091">MAAPARTAPEDDASAVLDELSRNFTYWAPGPGNGSLSSAWYRRNQIHLFGVLLAILGNLVISISLNIQKYSHLHLAQKEHPKPYFKSVLWLSGVLLTALGETGNFAAYGVAPITLIAPLGCMSVTGSAIISVLFLKENLRASDLLGMTLAFAGTYLLVNFAPNITQAISARTVQYYFVGWQFLVYVILEILVFCILLYFHKRKGMKHIVVLLTLVALLASLTVISVKAVSGMITLSVTGKMQLTYAIFYIMLVIMIASCVFQVKFLNQATELYTMTTVVPVNHVFFTTSAIIAGIIFYQEFLGAAFLTVFIYLFGCFLSFLGVFLVTRNREKEHLQQSFVDLGDIPGKQMLDKVQPDSNGLSYGTLPDGGDSTRGQCGEKKES</sequence>